<keyword id="KW-0963">Cytoplasm</keyword>
<keyword id="KW-0648">Protein biosynthesis</keyword>
<keyword id="KW-1185">Reference proteome</keyword>
<evidence type="ECO:0000255" key="1">
    <source>
        <dbReference type="HAMAP-Rule" id="MF_00040"/>
    </source>
</evidence>
<comment type="function">
    <text evidence="1">Responsible for the release of ribosomes from messenger RNA at the termination of protein biosynthesis. May increase the efficiency of translation by recycling ribosomes from one round of translation to another.</text>
</comment>
<comment type="subcellular location">
    <subcellularLocation>
        <location evidence="1">Cytoplasm</location>
    </subcellularLocation>
</comment>
<comment type="similarity">
    <text evidence="1">Belongs to the RRF family.</text>
</comment>
<organism>
    <name type="scientific">Borrelia turicatae (strain 91E135)</name>
    <dbReference type="NCBI Taxonomy" id="314724"/>
    <lineage>
        <taxon>Bacteria</taxon>
        <taxon>Pseudomonadati</taxon>
        <taxon>Spirochaetota</taxon>
        <taxon>Spirochaetia</taxon>
        <taxon>Spirochaetales</taxon>
        <taxon>Borreliaceae</taxon>
        <taxon>Borrelia</taxon>
    </lineage>
</organism>
<accession>A1QYS0</accession>
<gene>
    <name evidence="1" type="primary">frr</name>
    <name type="ordered locus">BT0121</name>
</gene>
<proteinExistence type="inferred from homology"/>
<reference key="1">
    <citation type="submission" date="2004-12" db="EMBL/GenBank/DDBJ databases">
        <title>The genome sequence of Borrelia hermsii and Borrelia turicatae: comparative analysis of two agents of endemic N. America relapsing fever.</title>
        <authorList>
            <person name="Porcella S.F."/>
            <person name="Raffel S.J."/>
            <person name="Schrumpf M.E."/>
            <person name="Montgomery B."/>
            <person name="Smith T."/>
            <person name="Schwan T.G."/>
        </authorList>
    </citation>
    <scope>NUCLEOTIDE SEQUENCE [LARGE SCALE GENOMIC DNA]</scope>
    <source>
        <strain>91E135</strain>
    </source>
</reference>
<protein>
    <recommendedName>
        <fullName evidence="1">Ribosome-recycling factor</fullName>
        <shortName evidence="1">RRF</shortName>
    </recommendedName>
    <alternativeName>
        <fullName evidence="1">Ribosome-releasing factor</fullName>
    </alternativeName>
</protein>
<sequence>MEEYKALLDEKMSKVLLSLESEYKSLRTGRINSSLFDKVLVDYYGEKTPLTRVANVSIPEARLIVIQPWDKSLLSKIEQAILSSDLSMNPSSDGAVLRIKVPVLTVERRKEIVKQAKKIAEEYKVAARNVRQELNSKAKKQEKDSQITEDDLRRILDDIQRDTNSYIKKIDEIFDLKTKEIMEV</sequence>
<feature type="chain" id="PRO_1000194903" description="Ribosome-recycling factor">
    <location>
        <begin position="1"/>
        <end position="184"/>
    </location>
</feature>
<name>RRF_BORT9</name>
<dbReference type="EMBL" id="CP000049">
    <property type="protein sequence ID" value="AAX17462.1"/>
    <property type="molecule type" value="Genomic_DNA"/>
</dbReference>
<dbReference type="RefSeq" id="WP_011772081.1">
    <property type="nucleotide sequence ID" value="NC_008710.1"/>
</dbReference>
<dbReference type="SMR" id="A1QYS0"/>
<dbReference type="KEGG" id="btu:BT0121"/>
<dbReference type="eggNOG" id="COG0233">
    <property type="taxonomic scope" value="Bacteria"/>
</dbReference>
<dbReference type="HOGENOM" id="CLU_073981_2_0_12"/>
<dbReference type="Proteomes" id="UP000001205">
    <property type="component" value="Chromosome"/>
</dbReference>
<dbReference type="GO" id="GO:0005737">
    <property type="term" value="C:cytoplasm"/>
    <property type="evidence" value="ECO:0007669"/>
    <property type="project" value="UniProtKB-SubCell"/>
</dbReference>
<dbReference type="GO" id="GO:0043023">
    <property type="term" value="F:ribosomal large subunit binding"/>
    <property type="evidence" value="ECO:0007669"/>
    <property type="project" value="TreeGrafter"/>
</dbReference>
<dbReference type="GO" id="GO:0006415">
    <property type="term" value="P:translational termination"/>
    <property type="evidence" value="ECO:0007669"/>
    <property type="project" value="UniProtKB-UniRule"/>
</dbReference>
<dbReference type="CDD" id="cd00520">
    <property type="entry name" value="RRF"/>
    <property type="match status" value="1"/>
</dbReference>
<dbReference type="FunFam" id="1.10.132.20:FF:000001">
    <property type="entry name" value="Ribosome-recycling factor"/>
    <property type="match status" value="1"/>
</dbReference>
<dbReference type="FunFam" id="3.30.1360.40:FF:000001">
    <property type="entry name" value="Ribosome-recycling factor"/>
    <property type="match status" value="1"/>
</dbReference>
<dbReference type="Gene3D" id="3.30.1360.40">
    <property type="match status" value="1"/>
</dbReference>
<dbReference type="Gene3D" id="1.10.132.20">
    <property type="entry name" value="Ribosome-recycling factor"/>
    <property type="match status" value="1"/>
</dbReference>
<dbReference type="HAMAP" id="MF_00040">
    <property type="entry name" value="RRF"/>
    <property type="match status" value="1"/>
</dbReference>
<dbReference type="InterPro" id="IPR002661">
    <property type="entry name" value="Ribosome_recyc_fac"/>
</dbReference>
<dbReference type="InterPro" id="IPR023584">
    <property type="entry name" value="Ribosome_recyc_fac_dom"/>
</dbReference>
<dbReference type="InterPro" id="IPR036191">
    <property type="entry name" value="RRF_sf"/>
</dbReference>
<dbReference type="NCBIfam" id="TIGR00496">
    <property type="entry name" value="frr"/>
    <property type="match status" value="1"/>
</dbReference>
<dbReference type="PANTHER" id="PTHR20982:SF3">
    <property type="entry name" value="MITOCHONDRIAL RIBOSOME RECYCLING FACTOR PSEUDO 1"/>
    <property type="match status" value="1"/>
</dbReference>
<dbReference type="PANTHER" id="PTHR20982">
    <property type="entry name" value="RIBOSOME RECYCLING FACTOR"/>
    <property type="match status" value="1"/>
</dbReference>
<dbReference type="Pfam" id="PF01765">
    <property type="entry name" value="RRF"/>
    <property type="match status" value="1"/>
</dbReference>
<dbReference type="SUPFAM" id="SSF55194">
    <property type="entry name" value="Ribosome recycling factor, RRF"/>
    <property type="match status" value="1"/>
</dbReference>